<comment type="similarity">
    <text evidence="3">Belongs to the rootletin family.</text>
</comment>
<accession>H7BZ55</accession>
<name>CRCC2_HUMAN</name>
<gene>
    <name evidence="4" type="primary">CROCC2</name>
</gene>
<evidence type="ECO:0000255" key="1"/>
<evidence type="ECO:0000256" key="2">
    <source>
        <dbReference type="SAM" id="MobiDB-lite"/>
    </source>
</evidence>
<evidence type="ECO:0000305" key="3"/>
<evidence type="ECO:0000312" key="4">
    <source>
        <dbReference type="HGNC" id="HGNC:51677"/>
    </source>
</evidence>
<proteinExistence type="evidence at protein level"/>
<reference key="1">
    <citation type="journal article" date="2005" name="Nature">
        <title>Generation and annotation of the DNA sequences of human chromosomes 2 and 4.</title>
        <authorList>
            <person name="Hillier L.W."/>
            <person name="Graves T.A."/>
            <person name="Fulton R.S."/>
            <person name="Fulton L.A."/>
            <person name="Pepin K.H."/>
            <person name="Minx P."/>
            <person name="Wagner-McPherson C."/>
            <person name="Layman D."/>
            <person name="Wylie K."/>
            <person name="Sekhon M."/>
            <person name="Becker M.C."/>
            <person name="Fewell G.A."/>
            <person name="Delehaunty K.D."/>
            <person name="Miner T.L."/>
            <person name="Nash W.E."/>
            <person name="Kremitzki C."/>
            <person name="Oddy L."/>
            <person name="Du H."/>
            <person name="Sun H."/>
            <person name="Bradshaw-Cordum H."/>
            <person name="Ali J."/>
            <person name="Carter J."/>
            <person name="Cordes M."/>
            <person name="Harris A."/>
            <person name="Isak A."/>
            <person name="van Brunt A."/>
            <person name="Nguyen C."/>
            <person name="Du F."/>
            <person name="Courtney L."/>
            <person name="Kalicki J."/>
            <person name="Ozersky P."/>
            <person name="Abbott S."/>
            <person name="Armstrong J."/>
            <person name="Belter E.A."/>
            <person name="Caruso L."/>
            <person name="Cedroni M."/>
            <person name="Cotton M."/>
            <person name="Davidson T."/>
            <person name="Desai A."/>
            <person name="Elliott G."/>
            <person name="Erb T."/>
            <person name="Fronick C."/>
            <person name="Gaige T."/>
            <person name="Haakenson W."/>
            <person name="Haglund K."/>
            <person name="Holmes A."/>
            <person name="Harkins R."/>
            <person name="Kim K."/>
            <person name="Kruchowski S.S."/>
            <person name="Strong C.M."/>
            <person name="Grewal N."/>
            <person name="Goyea E."/>
            <person name="Hou S."/>
            <person name="Levy A."/>
            <person name="Martinka S."/>
            <person name="Mead K."/>
            <person name="McLellan M.D."/>
            <person name="Meyer R."/>
            <person name="Randall-Maher J."/>
            <person name="Tomlinson C."/>
            <person name="Dauphin-Kohlberg S."/>
            <person name="Kozlowicz-Reilly A."/>
            <person name="Shah N."/>
            <person name="Swearengen-Shahid S."/>
            <person name="Snider J."/>
            <person name="Strong J.T."/>
            <person name="Thompson J."/>
            <person name="Yoakum M."/>
            <person name="Leonard S."/>
            <person name="Pearman C."/>
            <person name="Trani L."/>
            <person name="Radionenko M."/>
            <person name="Waligorski J.E."/>
            <person name="Wang C."/>
            <person name="Rock S.M."/>
            <person name="Tin-Wollam A.-M."/>
            <person name="Maupin R."/>
            <person name="Latreille P."/>
            <person name="Wendl M.C."/>
            <person name="Yang S.-P."/>
            <person name="Pohl C."/>
            <person name="Wallis J.W."/>
            <person name="Spieth J."/>
            <person name="Bieri T.A."/>
            <person name="Berkowicz N."/>
            <person name="Nelson J.O."/>
            <person name="Osborne J."/>
            <person name="Ding L."/>
            <person name="Meyer R."/>
            <person name="Sabo A."/>
            <person name="Shotland Y."/>
            <person name="Sinha P."/>
            <person name="Wohldmann P.E."/>
            <person name="Cook L.L."/>
            <person name="Hickenbotham M.T."/>
            <person name="Eldred J."/>
            <person name="Williams D."/>
            <person name="Jones T.A."/>
            <person name="She X."/>
            <person name="Ciccarelli F.D."/>
            <person name="Izaurralde E."/>
            <person name="Taylor J."/>
            <person name="Schmutz J."/>
            <person name="Myers R.M."/>
            <person name="Cox D.R."/>
            <person name="Huang X."/>
            <person name="McPherson J.D."/>
            <person name="Mardis E.R."/>
            <person name="Clifton S.W."/>
            <person name="Warren W.C."/>
            <person name="Chinwalla A.T."/>
            <person name="Eddy S.R."/>
            <person name="Marra M.A."/>
            <person name="Ovcharenko I."/>
            <person name="Furey T.S."/>
            <person name="Miller W."/>
            <person name="Eichler E.E."/>
            <person name="Bork P."/>
            <person name="Suyama M."/>
            <person name="Torrents D."/>
            <person name="Waterston R.H."/>
            <person name="Wilson R.K."/>
        </authorList>
    </citation>
    <scope>NUCLEOTIDE SEQUENCE [LARGE SCALE GENOMIC DNA]</scope>
</reference>
<reference key="2">
    <citation type="journal article" date="2008" name="Proc. Natl. Acad. Sci. U.S.A.">
        <title>A quantitative atlas of mitotic phosphorylation.</title>
        <authorList>
            <person name="Dephoure N."/>
            <person name="Zhou C."/>
            <person name="Villen J."/>
            <person name="Beausoleil S.A."/>
            <person name="Bakalarski C.E."/>
            <person name="Elledge S.J."/>
            <person name="Gygi S.P."/>
        </authorList>
    </citation>
    <scope>IDENTIFICATION BY MASS SPECTROMETRY [LARGE SCALE ANALYSIS]</scope>
    <source>
        <tissue>Cervix carcinoma</tissue>
    </source>
</reference>
<keyword id="KW-0175">Coiled coil</keyword>
<keyword id="KW-1267">Proteomics identification</keyword>
<keyword id="KW-1185">Reference proteome</keyword>
<dbReference type="EMBL" id="AC104809">
    <property type="status" value="NOT_ANNOTATED_CDS"/>
    <property type="molecule type" value="Genomic_DNA"/>
</dbReference>
<dbReference type="CCDS" id="CCDS92994.1"/>
<dbReference type="RefSeq" id="NP_001338234.1">
    <property type="nucleotide sequence ID" value="NM_001351305.2"/>
</dbReference>
<dbReference type="SMR" id="H7BZ55"/>
<dbReference type="FunCoup" id="H7BZ55">
    <property type="interactions" value="37"/>
</dbReference>
<dbReference type="IntAct" id="H7BZ55">
    <property type="interactions" value="2"/>
</dbReference>
<dbReference type="STRING" id="9606.ENSP00000397968"/>
<dbReference type="GlyGen" id="H7BZ55">
    <property type="glycosylation" value="4 sites, 1 O-linked glycan (2 sites)"/>
</dbReference>
<dbReference type="iPTMnet" id="H7BZ55"/>
<dbReference type="PhosphoSitePlus" id="H7BZ55"/>
<dbReference type="BioMuta" id="CROCC2"/>
<dbReference type="jPOST" id="H7BZ55"/>
<dbReference type="MassIVE" id="H7BZ55"/>
<dbReference type="PaxDb" id="9606-ENSP00000397968"/>
<dbReference type="PeptideAtlas" id="H7BZ55"/>
<dbReference type="Pumba" id="H7BZ55"/>
<dbReference type="Antibodypedia" id="62332">
    <property type="antibodies" value="3 antibodies from 3 providers"/>
</dbReference>
<dbReference type="Ensembl" id="ENST00000690015.1">
    <property type="protein sequence ID" value="ENSP00000508848.1"/>
    <property type="gene ID" value="ENSG00000226321.6"/>
</dbReference>
<dbReference type="GeneID" id="728763"/>
<dbReference type="MANE-Select" id="ENST00000690015.1">
    <property type="protein sequence ID" value="ENSP00000508848.1"/>
    <property type="RefSeq nucleotide sequence ID" value="NM_001351305.2"/>
    <property type="RefSeq protein sequence ID" value="NP_001338234.1"/>
</dbReference>
<dbReference type="AGR" id="HGNC:51677"/>
<dbReference type="GeneCards" id="CROCC2"/>
<dbReference type="HGNC" id="HGNC:51677">
    <property type="gene designation" value="CROCC2"/>
</dbReference>
<dbReference type="HPA" id="ENSG00000226321">
    <property type="expression patterns" value="Tissue enhanced (choroid plexus, fallopian tube, lymphoid tissue)"/>
</dbReference>
<dbReference type="neXtProt" id="NX_H7BZ55"/>
<dbReference type="OpenTargets" id="ENSG00000226321"/>
<dbReference type="VEuPathDB" id="HostDB:ENSG00000226321"/>
<dbReference type="eggNOG" id="ENOG502QQV3">
    <property type="taxonomic scope" value="Eukaryota"/>
</dbReference>
<dbReference type="GeneTree" id="ENSGT00940000162689"/>
<dbReference type="HOGENOM" id="CLU_000920_1_0_1"/>
<dbReference type="InParanoid" id="H7BZ55"/>
<dbReference type="OrthoDB" id="3549872at2759"/>
<dbReference type="PAN-GO" id="H7BZ55">
    <property type="GO annotations" value="0 GO annotations based on evolutionary models"/>
</dbReference>
<dbReference type="PathwayCommons" id="H7BZ55"/>
<dbReference type="SignaLink" id="H7BZ55"/>
<dbReference type="ChiTaRS" id="CROCC2">
    <property type="organism name" value="human"/>
</dbReference>
<dbReference type="Pharos" id="H7BZ55">
    <property type="development level" value="Tdark"/>
</dbReference>
<dbReference type="PRO" id="PR:H7BZ55"/>
<dbReference type="Proteomes" id="UP000005640">
    <property type="component" value="Chromosome 2"/>
</dbReference>
<dbReference type="RNAct" id="H7BZ55">
    <property type="molecule type" value="protein"/>
</dbReference>
<dbReference type="Bgee" id="ENSG00000226321">
    <property type="expression patterns" value="Expressed in right uterine tube and 80 other cell types or tissues"/>
</dbReference>
<dbReference type="GO" id="GO:0005814">
    <property type="term" value="C:centriole"/>
    <property type="evidence" value="ECO:0000318"/>
    <property type="project" value="GO_Central"/>
</dbReference>
<dbReference type="GO" id="GO:0005813">
    <property type="term" value="C:centrosome"/>
    <property type="evidence" value="ECO:0000318"/>
    <property type="project" value="GO_Central"/>
</dbReference>
<dbReference type="InterPro" id="IPR055167">
    <property type="entry name" value="Rootletin-like_CC"/>
</dbReference>
<dbReference type="PANTHER" id="PTHR23159">
    <property type="entry name" value="CENTROSOMAL PROTEIN 2"/>
    <property type="match status" value="1"/>
</dbReference>
<dbReference type="PANTHER" id="PTHR23159:SF16">
    <property type="entry name" value="CILIARY ROOTLET COILED-COIL PROTEIN 2"/>
    <property type="match status" value="1"/>
</dbReference>
<dbReference type="Pfam" id="PF15035">
    <property type="entry name" value="Rootletin"/>
    <property type="match status" value="1"/>
</dbReference>
<sequence length="1653" mass="185641">MSSASSEPGNGDASQQPLLGLDTVIQRLEDTILSPTASREDRALTVRGEGRQASPTPVPTRIREIVAGSLSEEPPQAGVQEPTATVARVQEENELLQEELTRLGDLLAQASAERDELASRCRVVSEQLQARLETTEAQLRRSELEHSVDLEEALGRLEAAEERSTGLCQVNALLREQLEHMKKANDALGRELAGMTGSVQRLQGELELRRWAQRQTRSGGLGQPRDLLLLWRQAVVLGTDLAELRVATERGLADLQADTARTARRLHTACLNLDSNLRLSASSTASTLGQQLRDKAGEMLQLQGRWDAEKVALQARLSEQTLLVEKLTEQNEQKAKTIAALRTDLQNLVAQEDARCLELAGSSITELGEPRRPLRSPQRATSPHQGASPPHICSPATLDPALQAMRAAIERRWRREQELCLQLKSSQALVASLQEQLSESRRELWAAQKLQQERAREQAREREALRGQLEAQRLEVQQCRASCKLLGREKAALEMVVEELKGKADAADAEKQGLEAEAAELQRSLLLQAERREELALRRERSCRALETSQGRLQQLEEKVSGLREELASVREALSTAQLQRDVVESEREGLRSALARAECSNADLELLVRRLKSEGVEQRDSLAAMAALMEGLAQDKSALNHLALQLEQERDQLREQRKTLEQERARAGEQLAQAEQQLALERAERRGLQQACGRLEQRQEQLEGQAALLGREKAQLQEQVGQVTCQKQALEEQLAQSLQDQEAQMGTLQQALQGKDALSEERAQLLAKQEALERQGRLAAEEAADLRVERDSLESSLLEAQQLATKLQEQLEEEARSAGLARQALQVEMEQLQSDWEVQEMKLRQDTVRLQRQVAQQEREAQRALESQALAHREALAQLQREKETLSLTLAEEKEVARCQLEQEKELVTKSAAEREALKGEIQSLKQERDESLLQLEHKMQQALSLKETERSLLSEELSRARRTLERVQQEAQSQQEQAQATISATTEELKALQAQFEDAITAHQRETTALRESLQDLAAERGDVEREAERLRAQLTVAQEGLAALRQELQGVEESREGLHREAQEARRALSDEAREKDVLLLFNSELRATICRAEQEKASFKRSKEEKEQKLLILEEAQAALQQEASALRAHLWELEQAGGDARQELRELHRQVRTLKAENQRRSGEAHELQAQCSQEVLELRRQAAKAEAKHEGARKEVLGLQRKLAEVEAAGEAHGQRLQEHLRESRGAEQTLRAELHSVTRKLQEASGVADALQARLDQACHRIHSLEQELAQAEGARQDAEAQLGRLCSTLRRGLGLQRQSPWASPEQPGSPTKGSDSSQALPGQQGTSPPARPHSPLRWPSPTPGGRSSELMDVATVQDILRDFVQKLREAQRERDDSRIQMATLSSRLSEAECRCARAQSRVGQLQKALAEAEEGQRRVEGALSSARAARALQKEALRRLELEHLASVRAAGQEKRRLQEQLETLRQALEESRRHSQGLAKQGKLLEEQLTNLEHRCQKAEVSLEPLRQMEQETLKREEDVARLGAEKEQLDQSLNSLHQEVDGALRQNQQLQAQMTEMEQAHTQRLQDLTAQHQRDLATEAERLHGARPQATQALESQEWTHQQQVKVLEEQVASLKEQLDQEVQWRQQAHLGQAFQTGHAQRD</sequence>
<feature type="chain" id="PRO_0000422613" description="Ciliary rootlet coiled-coil protein 2">
    <location>
        <begin position="1"/>
        <end position="1653"/>
    </location>
</feature>
<feature type="region of interest" description="Disordered" evidence="2">
    <location>
        <begin position="1"/>
        <end position="57"/>
    </location>
</feature>
<feature type="region of interest" description="Disordered" evidence="2">
    <location>
        <begin position="367"/>
        <end position="396"/>
    </location>
</feature>
<feature type="region of interest" description="Disordered" evidence="2">
    <location>
        <begin position="1302"/>
        <end position="1356"/>
    </location>
</feature>
<feature type="coiled-coil region" evidence="1">
    <location>
        <begin position="86"/>
        <end position="145"/>
    </location>
</feature>
<feature type="coiled-coil region" evidence="1">
    <location>
        <begin position="310"/>
        <end position="351"/>
    </location>
</feature>
<feature type="coiled-coil region" evidence="1">
    <location>
        <begin position="423"/>
        <end position="1215"/>
    </location>
</feature>
<feature type="coiled-coil region" evidence="1">
    <location>
        <begin position="1361"/>
        <end position="1570"/>
    </location>
</feature>
<feature type="compositionally biased region" description="Polar residues" evidence="2">
    <location>
        <begin position="1"/>
        <end position="17"/>
    </location>
</feature>
<feature type="compositionally biased region" description="Basic and acidic residues" evidence="2">
    <location>
        <begin position="38"/>
        <end position="50"/>
    </location>
</feature>
<feature type="compositionally biased region" description="Polar residues" evidence="2">
    <location>
        <begin position="1304"/>
        <end position="1335"/>
    </location>
</feature>
<protein>
    <recommendedName>
        <fullName evidence="3">Ciliary rootlet coiled-coil protein 2</fullName>
    </recommendedName>
</protein>
<organism>
    <name type="scientific">Homo sapiens</name>
    <name type="common">Human</name>
    <dbReference type="NCBI Taxonomy" id="9606"/>
    <lineage>
        <taxon>Eukaryota</taxon>
        <taxon>Metazoa</taxon>
        <taxon>Chordata</taxon>
        <taxon>Craniata</taxon>
        <taxon>Vertebrata</taxon>
        <taxon>Euteleostomi</taxon>
        <taxon>Mammalia</taxon>
        <taxon>Eutheria</taxon>
        <taxon>Euarchontoglires</taxon>
        <taxon>Primates</taxon>
        <taxon>Haplorrhini</taxon>
        <taxon>Catarrhini</taxon>
        <taxon>Hominidae</taxon>
        <taxon>Homo</taxon>
    </lineage>
</organism>